<dbReference type="EMBL" id="BC080092">
    <property type="protein sequence ID" value="AAH80092.1"/>
    <property type="molecule type" value="mRNA"/>
</dbReference>
<dbReference type="SMR" id="Q68EV8"/>
<dbReference type="DNASU" id="447372"/>
<dbReference type="GeneID" id="447372"/>
<dbReference type="KEGG" id="xla:447372"/>
<dbReference type="AGR" id="Xenbase:XB-GENE-6253992"/>
<dbReference type="CTD" id="447372"/>
<dbReference type="Xenbase" id="XB-GENE-6253992">
    <property type="gene designation" value="smim12.L"/>
</dbReference>
<dbReference type="OMA" id="HNPLEVN"/>
<dbReference type="OrthoDB" id="10052506at2759"/>
<dbReference type="Proteomes" id="UP000186698">
    <property type="component" value="Chromosome 2L"/>
</dbReference>
<dbReference type="Bgee" id="447372">
    <property type="expression patterns" value="Expressed in internal ear and 19 other cell types or tissues"/>
</dbReference>
<dbReference type="GO" id="GO:0016020">
    <property type="term" value="C:membrane"/>
    <property type="evidence" value="ECO:0007669"/>
    <property type="project" value="UniProtKB-SubCell"/>
</dbReference>
<dbReference type="InterPro" id="IPR031933">
    <property type="entry name" value="UPF0767"/>
</dbReference>
<dbReference type="PANTHER" id="PTHR28599">
    <property type="entry name" value="SMALL INTEGRAL MEMBRANE PROTEIN 12"/>
    <property type="match status" value="1"/>
</dbReference>
<dbReference type="PANTHER" id="PTHR28599:SF1">
    <property type="entry name" value="SMALL INTEGRAL MEMBRANE PROTEIN 12"/>
    <property type="match status" value="1"/>
</dbReference>
<dbReference type="Pfam" id="PF15990">
    <property type="entry name" value="UPF0767"/>
    <property type="match status" value="1"/>
</dbReference>
<organism>
    <name type="scientific">Xenopus laevis</name>
    <name type="common">African clawed frog</name>
    <dbReference type="NCBI Taxonomy" id="8355"/>
    <lineage>
        <taxon>Eukaryota</taxon>
        <taxon>Metazoa</taxon>
        <taxon>Chordata</taxon>
        <taxon>Craniata</taxon>
        <taxon>Vertebrata</taxon>
        <taxon>Euteleostomi</taxon>
        <taxon>Amphibia</taxon>
        <taxon>Batrachia</taxon>
        <taxon>Anura</taxon>
        <taxon>Pipoidea</taxon>
        <taxon>Pipidae</taxon>
        <taxon>Xenopodinae</taxon>
        <taxon>Xenopus</taxon>
        <taxon>Xenopus</taxon>
    </lineage>
</organism>
<evidence type="ECO:0000255" key="1"/>
<evidence type="ECO:0000305" key="2"/>
<feature type="chain" id="PRO_0000414326" description="Small integral membrane protein 12-B">
    <location>
        <begin position="1"/>
        <end position="91"/>
    </location>
</feature>
<feature type="transmembrane region" description="Helical" evidence="1">
    <location>
        <begin position="12"/>
        <end position="34"/>
    </location>
</feature>
<accession>Q68EV8</accession>
<reference key="1">
    <citation type="submission" date="2004-08" db="EMBL/GenBank/DDBJ databases">
        <authorList>
            <consortium name="NIH - Xenopus Gene Collection (XGC) project"/>
        </authorList>
    </citation>
    <scope>NUCLEOTIDE SEQUENCE [LARGE SCALE MRNA]</scope>
    <source>
        <tissue>Brain</tissue>
    </source>
</reference>
<proteinExistence type="inferred from homology"/>
<gene>
    <name type="primary">smim12-b</name>
</gene>
<name>SI12B_XENLA</name>
<keyword id="KW-0472">Membrane</keyword>
<keyword id="KW-1185">Reference proteome</keyword>
<keyword id="KW-0812">Transmembrane</keyword>
<keyword id="KW-1133">Transmembrane helix</keyword>
<comment type="subcellular location">
    <subcellularLocation>
        <location evidence="2">Membrane</location>
        <topology evidence="2">Single-pass membrane protein</topology>
    </subcellularLocation>
</comment>
<comment type="similarity">
    <text evidence="2">Belongs to the SMIM12 family.</text>
</comment>
<protein>
    <recommendedName>
        <fullName>Small integral membrane protein 12-B</fullName>
    </recommendedName>
</protein>
<sequence length="91" mass="10507">MWPVLWAAARTYAPYITFPVAFVVGAVGYQLEWFIRGTPGHPVEEQSILEKREERTLQETMGKDVTQVISLKEKLEFTPKAVLNRNRQEKS</sequence>